<feature type="signal peptide" evidence="1">
    <location>
        <begin position="1"/>
        <end position="20"/>
    </location>
</feature>
<feature type="chain" id="PRO_0000014310" description="Putative uncharacterized protein YBR013C">
    <location>
        <begin position="21"/>
        <end position="129"/>
    </location>
</feature>
<keyword id="KW-1185">Reference proteome</keyword>
<keyword id="KW-0732">Signal</keyword>
<proteinExistence type="inferred from homology"/>
<name>YBM3_YEAST</name>
<reference key="1">
    <citation type="journal article" date="1994" name="EMBO J.">
        <title>Complete DNA sequence of yeast chromosome II.</title>
        <authorList>
            <person name="Feldmann H."/>
            <person name="Aigle M."/>
            <person name="Aljinovic G."/>
            <person name="Andre B."/>
            <person name="Baclet M.C."/>
            <person name="Barthe C."/>
            <person name="Baur A."/>
            <person name="Becam A.-M."/>
            <person name="Biteau N."/>
            <person name="Boles E."/>
            <person name="Brandt T."/>
            <person name="Brendel M."/>
            <person name="Brueckner M."/>
            <person name="Bussereau F."/>
            <person name="Christiansen C."/>
            <person name="Contreras R."/>
            <person name="Crouzet M."/>
            <person name="Cziepluch C."/>
            <person name="Demolis N."/>
            <person name="Delaveau T."/>
            <person name="Doignon F."/>
            <person name="Domdey H."/>
            <person name="Duesterhus S."/>
            <person name="Dubois E."/>
            <person name="Dujon B."/>
            <person name="El Bakkoury M."/>
            <person name="Entian K.-D."/>
            <person name="Feuermann M."/>
            <person name="Fiers W."/>
            <person name="Fobo G.M."/>
            <person name="Fritz C."/>
            <person name="Gassenhuber J."/>
            <person name="Glansdorff N."/>
            <person name="Goffeau A."/>
            <person name="Grivell L.A."/>
            <person name="de Haan M."/>
            <person name="Hein C."/>
            <person name="Herbert C.J."/>
            <person name="Hollenberg C.P."/>
            <person name="Holmstroem K."/>
            <person name="Jacq C."/>
            <person name="Jacquet M."/>
            <person name="Jauniaux J.-C."/>
            <person name="Jonniaux J.-L."/>
            <person name="Kallesoee T."/>
            <person name="Kiesau P."/>
            <person name="Kirchrath L."/>
            <person name="Koetter P."/>
            <person name="Korol S."/>
            <person name="Liebl S."/>
            <person name="Logghe M."/>
            <person name="Lohan A.J.E."/>
            <person name="Louis E.J."/>
            <person name="Li Z.Y."/>
            <person name="Maat M.J."/>
            <person name="Mallet L."/>
            <person name="Mannhaupt G."/>
            <person name="Messenguy F."/>
            <person name="Miosga T."/>
            <person name="Molemans F."/>
            <person name="Mueller S."/>
            <person name="Nasr F."/>
            <person name="Obermaier B."/>
            <person name="Perea J."/>
            <person name="Pierard A."/>
            <person name="Piravandi E."/>
            <person name="Pohl F.M."/>
            <person name="Pohl T.M."/>
            <person name="Potier S."/>
            <person name="Proft M."/>
            <person name="Purnelle B."/>
            <person name="Ramezani Rad M."/>
            <person name="Rieger M."/>
            <person name="Rose M."/>
            <person name="Schaaff-Gerstenschlaeger I."/>
            <person name="Scherens B."/>
            <person name="Schwarzlose C."/>
            <person name="Skala J."/>
            <person name="Slonimski P.P."/>
            <person name="Smits P.H.M."/>
            <person name="Souciet J.-L."/>
            <person name="Steensma H.Y."/>
            <person name="Stucka R."/>
            <person name="Urrestarazu L.A."/>
            <person name="van der Aart Q.J.M."/>
            <person name="Van Dyck L."/>
            <person name="Vassarotti A."/>
            <person name="Vetter I."/>
            <person name="Vierendeels F."/>
            <person name="Vissers S."/>
            <person name="Wagner G."/>
            <person name="de Wergifosse P."/>
            <person name="Wolfe K.H."/>
            <person name="Zagulski M."/>
            <person name="Zimmermann F.K."/>
            <person name="Mewes H.-W."/>
            <person name="Kleine K."/>
        </authorList>
    </citation>
    <scope>NUCLEOTIDE SEQUENCE [LARGE SCALE GENOMIC DNA]</scope>
    <source>
        <strain>ATCC 204508 / S288c</strain>
    </source>
</reference>
<reference key="2">
    <citation type="journal article" date="2014" name="G3 (Bethesda)">
        <title>The reference genome sequence of Saccharomyces cerevisiae: Then and now.</title>
        <authorList>
            <person name="Engel S.R."/>
            <person name="Dietrich F.S."/>
            <person name="Fisk D.G."/>
            <person name="Binkley G."/>
            <person name="Balakrishnan R."/>
            <person name="Costanzo M.C."/>
            <person name="Dwight S.S."/>
            <person name="Hitz B.C."/>
            <person name="Karra K."/>
            <person name="Nash R.S."/>
            <person name="Weng S."/>
            <person name="Wong E.D."/>
            <person name="Lloyd P."/>
            <person name="Skrzypek M.S."/>
            <person name="Miyasato S.R."/>
            <person name="Simison M."/>
            <person name="Cherry J.M."/>
        </authorList>
    </citation>
    <scope>GENOME REANNOTATION</scope>
    <source>
        <strain>ATCC 204508 / S288c</strain>
    </source>
</reference>
<sequence length="129" mass="14482">MIYPLFRICILGAFLLGSYACLENSTQKGIEGVTLSHNSVQINNTLAKSAPFCESDALSMNYSTENMLSNNACDYTKNSSYPYIITIITKAFDNALENSLNLQANRKLYHRVGTCIQNIFYQLLLTVNY</sequence>
<organism>
    <name type="scientific">Saccharomyces cerevisiae (strain ATCC 204508 / S288c)</name>
    <name type="common">Baker's yeast</name>
    <dbReference type="NCBI Taxonomy" id="559292"/>
    <lineage>
        <taxon>Eukaryota</taxon>
        <taxon>Fungi</taxon>
        <taxon>Dikarya</taxon>
        <taxon>Ascomycota</taxon>
        <taxon>Saccharomycotina</taxon>
        <taxon>Saccharomycetes</taxon>
        <taxon>Saccharomycetales</taxon>
        <taxon>Saccharomycetaceae</taxon>
        <taxon>Saccharomyces</taxon>
    </lineage>
</organism>
<evidence type="ECO:0000255" key="1"/>
<dbReference type="EMBL" id="Z35882">
    <property type="protein sequence ID" value="CAA84955.1"/>
    <property type="molecule type" value="Genomic_DNA"/>
</dbReference>
<dbReference type="EMBL" id="BK006936">
    <property type="protein sequence ID" value="DAA07135.1"/>
    <property type="molecule type" value="Genomic_DNA"/>
</dbReference>
<dbReference type="PIR" id="S45868">
    <property type="entry name" value="S45868"/>
</dbReference>
<dbReference type="RefSeq" id="NP_009569.1">
    <property type="nucleotide sequence ID" value="NM_001178361.1"/>
</dbReference>
<dbReference type="BioGRID" id="32715">
    <property type="interactions" value="26"/>
</dbReference>
<dbReference type="DIP" id="DIP-4889N"/>
<dbReference type="FunCoup" id="P38215">
    <property type="interactions" value="33"/>
</dbReference>
<dbReference type="IntAct" id="P38215">
    <property type="interactions" value="2"/>
</dbReference>
<dbReference type="STRING" id="4932.YBR013C"/>
<dbReference type="PaxDb" id="4932-YBR013C"/>
<dbReference type="EnsemblFungi" id="YBR013C_mRNA">
    <property type="protein sequence ID" value="YBR013C"/>
    <property type="gene ID" value="YBR013C"/>
</dbReference>
<dbReference type="GeneID" id="852300"/>
<dbReference type="KEGG" id="sce:YBR013C"/>
<dbReference type="AGR" id="SGD:S000000217"/>
<dbReference type="SGD" id="S000000217">
    <property type="gene designation" value="YBR013C"/>
</dbReference>
<dbReference type="VEuPathDB" id="FungiDB:YBR013C"/>
<dbReference type="HOGENOM" id="CLU_1950503_0_0_1"/>
<dbReference type="InParanoid" id="P38215"/>
<dbReference type="OrthoDB" id="4069830at2759"/>
<dbReference type="BioCyc" id="YEAST:G3O-28998-MONOMER"/>
<dbReference type="BioGRID-ORCS" id="852300">
    <property type="hits" value="0 hits in 10 CRISPR screens"/>
</dbReference>
<dbReference type="PRO" id="PR:P38215"/>
<dbReference type="Proteomes" id="UP000002311">
    <property type="component" value="Chromosome II"/>
</dbReference>
<dbReference type="RNAct" id="P38215">
    <property type="molecule type" value="protein"/>
</dbReference>
<dbReference type="GO" id="GO:0005783">
    <property type="term" value="C:endoplasmic reticulum"/>
    <property type="evidence" value="ECO:0007005"/>
    <property type="project" value="SGD"/>
</dbReference>
<accession>P38215</accession>
<accession>D6VQ15</accession>
<gene>
    <name type="ordered locus">YBR013C</name>
    <name type="ORF">YBR0209</name>
</gene>
<protein>
    <recommendedName>
        <fullName>Putative uncharacterized protein YBR013C</fullName>
    </recommendedName>
</protein>